<comment type="function">
    <text evidence="1">Catalyzes the cyclization of GTP to (8S)-3',8-cyclo-7,8-dihydroguanosine 5'-triphosphate.</text>
</comment>
<comment type="catalytic activity">
    <reaction evidence="1">
        <text>GTP + AH2 + S-adenosyl-L-methionine = (8S)-3',8-cyclo-7,8-dihydroguanosine 5'-triphosphate + 5'-deoxyadenosine + L-methionine + A + H(+)</text>
        <dbReference type="Rhea" id="RHEA:49576"/>
        <dbReference type="ChEBI" id="CHEBI:13193"/>
        <dbReference type="ChEBI" id="CHEBI:15378"/>
        <dbReference type="ChEBI" id="CHEBI:17319"/>
        <dbReference type="ChEBI" id="CHEBI:17499"/>
        <dbReference type="ChEBI" id="CHEBI:37565"/>
        <dbReference type="ChEBI" id="CHEBI:57844"/>
        <dbReference type="ChEBI" id="CHEBI:59789"/>
        <dbReference type="ChEBI" id="CHEBI:131766"/>
        <dbReference type="EC" id="4.1.99.22"/>
    </reaction>
</comment>
<comment type="cofactor">
    <cofactor evidence="1">
        <name>[4Fe-4S] cluster</name>
        <dbReference type="ChEBI" id="CHEBI:49883"/>
    </cofactor>
    <text evidence="1">Binds 2 [4Fe-4S] clusters. Binds 1 [4Fe-4S] cluster coordinated with 3 cysteines and an exchangeable S-adenosyl-L-methionine and 1 [4Fe-4S] cluster coordinated with 3 cysteines and the GTP-derived substrate.</text>
</comment>
<comment type="pathway">
    <text evidence="1">Cofactor biosynthesis; molybdopterin biosynthesis.</text>
</comment>
<comment type="subunit">
    <text evidence="1">Monomer and homodimer.</text>
</comment>
<comment type="similarity">
    <text evidence="1">Belongs to the radical SAM superfamily. MoaA family.</text>
</comment>
<accession>A9MAX5</accession>
<gene>
    <name evidence="1" type="primary">moaA</name>
    <name type="ordered locus">BCAN_A0970</name>
</gene>
<protein>
    <recommendedName>
        <fullName evidence="1">GTP 3',8-cyclase</fullName>
        <ecNumber evidence="1">4.1.99.22</ecNumber>
    </recommendedName>
    <alternativeName>
        <fullName evidence="1">Molybdenum cofactor biosynthesis protein A</fullName>
    </alternativeName>
</protein>
<proteinExistence type="inferred from homology"/>
<dbReference type="EC" id="4.1.99.22" evidence="1"/>
<dbReference type="EMBL" id="CP000872">
    <property type="protein sequence ID" value="ABX62028.1"/>
    <property type="molecule type" value="Genomic_DNA"/>
</dbReference>
<dbReference type="RefSeq" id="WP_004689666.1">
    <property type="nucleotide sequence ID" value="NC_010103.1"/>
</dbReference>
<dbReference type="SMR" id="A9MAX5"/>
<dbReference type="GeneID" id="55590656"/>
<dbReference type="KEGG" id="bcs:BCAN_A0970"/>
<dbReference type="HOGENOM" id="CLU_009273_0_1_5"/>
<dbReference type="UniPathway" id="UPA00344"/>
<dbReference type="Proteomes" id="UP000001385">
    <property type="component" value="Chromosome I"/>
</dbReference>
<dbReference type="GO" id="GO:0051539">
    <property type="term" value="F:4 iron, 4 sulfur cluster binding"/>
    <property type="evidence" value="ECO:0007669"/>
    <property type="project" value="UniProtKB-UniRule"/>
</dbReference>
<dbReference type="GO" id="GO:0061799">
    <property type="term" value="F:cyclic pyranopterin monophosphate synthase activity"/>
    <property type="evidence" value="ECO:0007669"/>
    <property type="project" value="TreeGrafter"/>
</dbReference>
<dbReference type="GO" id="GO:0061798">
    <property type="term" value="F:GTP 3',8'-cyclase activity"/>
    <property type="evidence" value="ECO:0007669"/>
    <property type="project" value="UniProtKB-UniRule"/>
</dbReference>
<dbReference type="GO" id="GO:0005525">
    <property type="term" value="F:GTP binding"/>
    <property type="evidence" value="ECO:0007669"/>
    <property type="project" value="UniProtKB-UniRule"/>
</dbReference>
<dbReference type="GO" id="GO:0046872">
    <property type="term" value="F:metal ion binding"/>
    <property type="evidence" value="ECO:0007669"/>
    <property type="project" value="UniProtKB-KW"/>
</dbReference>
<dbReference type="GO" id="GO:1904047">
    <property type="term" value="F:S-adenosyl-L-methionine binding"/>
    <property type="evidence" value="ECO:0007669"/>
    <property type="project" value="UniProtKB-UniRule"/>
</dbReference>
<dbReference type="GO" id="GO:0006777">
    <property type="term" value="P:Mo-molybdopterin cofactor biosynthetic process"/>
    <property type="evidence" value="ECO:0007669"/>
    <property type="project" value="UniProtKB-UniRule"/>
</dbReference>
<dbReference type="CDD" id="cd01335">
    <property type="entry name" value="Radical_SAM"/>
    <property type="match status" value="1"/>
</dbReference>
<dbReference type="CDD" id="cd21117">
    <property type="entry name" value="Twitch_MoaA"/>
    <property type="match status" value="1"/>
</dbReference>
<dbReference type="Gene3D" id="3.20.20.70">
    <property type="entry name" value="Aldolase class I"/>
    <property type="match status" value="1"/>
</dbReference>
<dbReference type="HAMAP" id="MF_01225_B">
    <property type="entry name" value="MoaA_B"/>
    <property type="match status" value="1"/>
</dbReference>
<dbReference type="InterPro" id="IPR013785">
    <property type="entry name" value="Aldolase_TIM"/>
</dbReference>
<dbReference type="InterPro" id="IPR006638">
    <property type="entry name" value="Elp3/MiaA/NifB-like_rSAM"/>
</dbReference>
<dbReference type="InterPro" id="IPR013483">
    <property type="entry name" value="MoaA"/>
</dbReference>
<dbReference type="InterPro" id="IPR000385">
    <property type="entry name" value="MoaA_NifB_PqqE_Fe-S-bd_CS"/>
</dbReference>
<dbReference type="InterPro" id="IPR010505">
    <property type="entry name" value="MoaA_twitch"/>
</dbReference>
<dbReference type="InterPro" id="IPR050105">
    <property type="entry name" value="MoCo_biosynth_MoaA/MoaC"/>
</dbReference>
<dbReference type="InterPro" id="IPR007197">
    <property type="entry name" value="rSAM"/>
</dbReference>
<dbReference type="NCBIfam" id="TIGR02666">
    <property type="entry name" value="moaA"/>
    <property type="match status" value="1"/>
</dbReference>
<dbReference type="PANTHER" id="PTHR22960:SF0">
    <property type="entry name" value="MOLYBDENUM COFACTOR BIOSYNTHESIS PROTEIN 1"/>
    <property type="match status" value="1"/>
</dbReference>
<dbReference type="PANTHER" id="PTHR22960">
    <property type="entry name" value="MOLYBDOPTERIN COFACTOR SYNTHESIS PROTEIN A"/>
    <property type="match status" value="1"/>
</dbReference>
<dbReference type="Pfam" id="PF13353">
    <property type="entry name" value="Fer4_12"/>
    <property type="match status" value="1"/>
</dbReference>
<dbReference type="Pfam" id="PF06463">
    <property type="entry name" value="Mob_synth_C"/>
    <property type="match status" value="1"/>
</dbReference>
<dbReference type="Pfam" id="PF04055">
    <property type="entry name" value="Radical_SAM"/>
    <property type="match status" value="1"/>
</dbReference>
<dbReference type="SFLD" id="SFLDG01383">
    <property type="entry name" value="cyclic_pyranopterin_phosphate"/>
    <property type="match status" value="1"/>
</dbReference>
<dbReference type="SFLD" id="SFLDG01386">
    <property type="entry name" value="main_SPASM_domain-containing"/>
    <property type="match status" value="1"/>
</dbReference>
<dbReference type="SMART" id="SM00729">
    <property type="entry name" value="Elp3"/>
    <property type="match status" value="1"/>
</dbReference>
<dbReference type="SUPFAM" id="SSF102114">
    <property type="entry name" value="Radical SAM enzymes"/>
    <property type="match status" value="1"/>
</dbReference>
<dbReference type="PROSITE" id="PS01305">
    <property type="entry name" value="MOAA_NIFB_PQQE"/>
    <property type="match status" value="1"/>
</dbReference>
<dbReference type="PROSITE" id="PS51918">
    <property type="entry name" value="RADICAL_SAM"/>
    <property type="match status" value="1"/>
</dbReference>
<keyword id="KW-0004">4Fe-4S</keyword>
<keyword id="KW-0342">GTP-binding</keyword>
<keyword id="KW-0408">Iron</keyword>
<keyword id="KW-0411">Iron-sulfur</keyword>
<keyword id="KW-0456">Lyase</keyword>
<keyword id="KW-0479">Metal-binding</keyword>
<keyword id="KW-0501">Molybdenum cofactor biosynthesis</keyword>
<keyword id="KW-0547">Nucleotide-binding</keyword>
<keyword id="KW-1185">Reference proteome</keyword>
<keyword id="KW-0949">S-adenosyl-L-methionine</keyword>
<name>MOAA_BRUC2</name>
<organism>
    <name type="scientific">Brucella canis (strain ATCC 23365 / NCTC 10854 / RM-666)</name>
    <dbReference type="NCBI Taxonomy" id="483179"/>
    <lineage>
        <taxon>Bacteria</taxon>
        <taxon>Pseudomonadati</taxon>
        <taxon>Pseudomonadota</taxon>
        <taxon>Alphaproteobacteria</taxon>
        <taxon>Hyphomicrobiales</taxon>
        <taxon>Brucellaceae</taxon>
        <taxon>Brucella/Ochrobactrum group</taxon>
        <taxon>Brucella</taxon>
    </lineage>
</organism>
<feature type="chain" id="PRO_1000085694" description="GTP 3',8-cyclase">
    <location>
        <begin position="1"/>
        <end position="344"/>
    </location>
</feature>
<feature type="domain" description="Radical SAM core" evidence="2">
    <location>
        <begin position="19"/>
        <end position="245"/>
    </location>
</feature>
<feature type="binding site" evidence="1">
    <location>
        <position position="28"/>
    </location>
    <ligand>
        <name>GTP</name>
        <dbReference type="ChEBI" id="CHEBI:37565"/>
    </ligand>
</feature>
<feature type="binding site" evidence="1">
    <location>
        <position position="35"/>
    </location>
    <ligand>
        <name>[4Fe-4S] cluster</name>
        <dbReference type="ChEBI" id="CHEBI:49883"/>
        <label>1</label>
        <note>4Fe-4S-S-AdoMet</note>
    </ligand>
</feature>
<feature type="binding site" evidence="1">
    <location>
        <position position="39"/>
    </location>
    <ligand>
        <name>[4Fe-4S] cluster</name>
        <dbReference type="ChEBI" id="CHEBI:49883"/>
        <label>1</label>
        <note>4Fe-4S-S-AdoMet</note>
    </ligand>
</feature>
<feature type="binding site" evidence="1">
    <location>
        <position position="41"/>
    </location>
    <ligand>
        <name>S-adenosyl-L-methionine</name>
        <dbReference type="ChEBI" id="CHEBI:59789"/>
    </ligand>
</feature>
<feature type="binding site" evidence="1">
    <location>
        <position position="42"/>
    </location>
    <ligand>
        <name>[4Fe-4S] cluster</name>
        <dbReference type="ChEBI" id="CHEBI:49883"/>
        <label>1</label>
        <note>4Fe-4S-S-AdoMet</note>
    </ligand>
</feature>
<feature type="binding site" evidence="1">
    <location>
        <position position="77"/>
    </location>
    <ligand>
        <name>GTP</name>
        <dbReference type="ChEBI" id="CHEBI:37565"/>
    </ligand>
</feature>
<feature type="binding site" evidence="1">
    <location>
        <position position="81"/>
    </location>
    <ligand>
        <name>S-adenosyl-L-methionine</name>
        <dbReference type="ChEBI" id="CHEBI:59789"/>
    </ligand>
</feature>
<feature type="binding site" evidence="1">
    <location>
        <position position="111"/>
    </location>
    <ligand>
        <name>GTP</name>
        <dbReference type="ChEBI" id="CHEBI:37565"/>
    </ligand>
</feature>
<feature type="binding site" evidence="1">
    <location>
        <position position="135"/>
    </location>
    <ligand>
        <name>S-adenosyl-L-methionine</name>
        <dbReference type="ChEBI" id="CHEBI:59789"/>
    </ligand>
</feature>
<feature type="binding site" evidence="1">
    <location>
        <position position="171"/>
    </location>
    <ligand>
        <name>GTP</name>
        <dbReference type="ChEBI" id="CHEBI:37565"/>
    </ligand>
</feature>
<feature type="binding site" evidence="1">
    <location>
        <position position="205"/>
    </location>
    <ligand>
        <name>S-adenosyl-L-methionine</name>
        <dbReference type="ChEBI" id="CHEBI:59789"/>
    </ligand>
</feature>
<feature type="binding site" evidence="1">
    <location>
        <position position="268"/>
    </location>
    <ligand>
        <name>[4Fe-4S] cluster</name>
        <dbReference type="ChEBI" id="CHEBI:49883"/>
        <label>2</label>
        <note>4Fe-4S-substrate</note>
    </ligand>
</feature>
<feature type="binding site" evidence="1">
    <location>
        <position position="271"/>
    </location>
    <ligand>
        <name>[4Fe-4S] cluster</name>
        <dbReference type="ChEBI" id="CHEBI:49883"/>
        <label>2</label>
        <note>4Fe-4S-substrate</note>
    </ligand>
</feature>
<feature type="binding site" evidence="1">
    <location>
        <begin position="273"/>
        <end position="275"/>
    </location>
    <ligand>
        <name>GTP</name>
        <dbReference type="ChEBI" id="CHEBI:37565"/>
    </ligand>
</feature>
<feature type="binding site" evidence="1">
    <location>
        <position position="285"/>
    </location>
    <ligand>
        <name>[4Fe-4S] cluster</name>
        <dbReference type="ChEBI" id="CHEBI:49883"/>
        <label>2</label>
        <note>4Fe-4S-substrate</note>
    </ligand>
</feature>
<sequence length="344" mass="38603">MRNVQAQPLVSPTEPMIDPFGRAVTYLRVSVTDRCDFRCTYCMAEHMTFLPKKDLLTLEELDRLCSVFIEKGVRKLRLTGGEPLVRKNIMHLIGNLSRHLKSGALDELTLTTNGSQLARFAGELADCGVRRINVSLDTLNPEKFRTITRWGDLSRVLEGIDAAQKAGIHVKINAVALKDFNDAEIPELIRWAHGRGMDVTLIETMPMGEIEFDRTDQYLPLSQVRADLASQFTLADIPYRTGGPARYVTISETGGRLGFITPMTHNFCESCNRVRLTCTGMLYMCLGQNDDADLRKALRESESDEHLSQAIDEAISRKPKGHDFIIDREHNRPSVARHMSLTGG</sequence>
<reference key="1">
    <citation type="submission" date="2007-10" db="EMBL/GenBank/DDBJ databases">
        <title>Brucella canis ATCC 23365 whole genome shotgun sequencing project.</title>
        <authorList>
            <person name="Setubal J.C."/>
            <person name="Bowns C."/>
            <person name="Boyle S."/>
            <person name="Crasta O.R."/>
            <person name="Czar M.J."/>
            <person name="Dharmanolla C."/>
            <person name="Gillespie J.J."/>
            <person name="Kenyon R.W."/>
            <person name="Lu J."/>
            <person name="Mane S."/>
            <person name="Mohapatra S."/>
            <person name="Nagrani S."/>
            <person name="Purkayastha A."/>
            <person name="Rajasimha H.K."/>
            <person name="Shallom J.M."/>
            <person name="Shallom S."/>
            <person name="Shukla M."/>
            <person name="Snyder E.E."/>
            <person name="Sobral B.W."/>
            <person name="Wattam A.R."/>
            <person name="Will R."/>
            <person name="Williams K."/>
            <person name="Yoo H."/>
            <person name="Bruce D."/>
            <person name="Detter C."/>
            <person name="Munk C."/>
            <person name="Brettin T.S."/>
        </authorList>
    </citation>
    <scope>NUCLEOTIDE SEQUENCE [LARGE SCALE GENOMIC DNA]</scope>
    <source>
        <strain>ATCC 23365 / NCTC 10854 / RM-666</strain>
    </source>
</reference>
<evidence type="ECO:0000255" key="1">
    <source>
        <dbReference type="HAMAP-Rule" id="MF_01225"/>
    </source>
</evidence>
<evidence type="ECO:0000255" key="2">
    <source>
        <dbReference type="PROSITE-ProRule" id="PRU01266"/>
    </source>
</evidence>